<gene>
    <name type="primary">NUR1</name>
    <name type="ORF">SCY_0826</name>
</gene>
<organism>
    <name type="scientific">Saccharomyces cerevisiae (strain YJM789)</name>
    <name type="common">Baker's yeast</name>
    <dbReference type="NCBI Taxonomy" id="307796"/>
    <lineage>
        <taxon>Eukaryota</taxon>
        <taxon>Fungi</taxon>
        <taxon>Dikarya</taxon>
        <taxon>Ascomycota</taxon>
        <taxon>Saccharomycotina</taxon>
        <taxon>Saccharomycetes</taxon>
        <taxon>Saccharomycetales</taxon>
        <taxon>Saccharomycetaceae</taxon>
        <taxon>Saccharomyces</taxon>
    </lineage>
</organism>
<feature type="chain" id="PRO_0000409034" description="Nuclear rim protein 1">
    <location>
        <begin position="1"/>
        <end position="484"/>
    </location>
</feature>
<feature type="transmembrane region" description="Helical" evidence="3">
    <location>
        <begin position="145"/>
        <end position="165"/>
    </location>
</feature>
<feature type="transmembrane region" description="Helical" evidence="3">
    <location>
        <begin position="252"/>
        <end position="272"/>
    </location>
</feature>
<feature type="region of interest" description="Disordered" evidence="4">
    <location>
        <begin position="416"/>
        <end position="458"/>
    </location>
</feature>
<feature type="compositionally biased region" description="Polar residues" evidence="4">
    <location>
        <begin position="430"/>
        <end position="440"/>
    </location>
</feature>
<feature type="modified residue" description="Phosphoserine" evidence="2">
    <location>
        <position position="3"/>
    </location>
</feature>
<feature type="modified residue" description="Phosphoserine" evidence="2">
    <location>
        <position position="417"/>
    </location>
</feature>
<feature type="modified residue" description="Phosphoserine" evidence="2">
    <location>
        <position position="474"/>
    </location>
</feature>
<comment type="function">
    <text evidence="1">Member of a perinuclear network that controls recombination at multiple loci to maintain genome stability. Required for rDNA repeat stability (By similarity).</text>
</comment>
<comment type="subunit">
    <text evidence="1">Interacts with CSM1.</text>
</comment>
<comment type="subcellular location">
    <subcellularLocation>
        <location evidence="1">Nucleus membrane</location>
        <topology evidence="1">Multi-pass membrane protein</topology>
    </subcellularLocation>
</comment>
<comment type="similarity">
    <text evidence="5">Belongs to the NUR1 family.</text>
</comment>
<sequence length="484" mass="56805">MGSNDLINEAYDDSEVVGEERESKSAWMKRWYQLLTSPLDLQLVINEKLEMINWDAYAKSLAKPLGNFLTILFFIIRLLQDNLIKPNYYKLNVKSGAFDLSKSNKLKEFDYLWEISSSFQNSNQFYAFQSWYFVTLRFLNNLFRFTIFILLSLNLYVSCKFMFGYFKTYNLFHLKKEFNSPNLTKHNLKDLSKEYYEDIYKQSLWSMLKHFFRGSRDDGPHVNQNEVEIFFQLRKWIPTNFMINLFVSFSPTAIVFLSFSDVSFTSAIAIVFHQYILDYIITKRFQRSVDDDLILSSAALQEYEDKHIMARINQCSNIDTLSSAMGTRSKTPRIFTTHSLCGEEIREVYNYEKREFEALPKMTESVPGSRETRIKDYGGISQVSDNQSHPIGFHYSPRMSPYYRDKVLDNNLAQSSSNENLEKGGAFLPNQDQNRPSKSLSPLRKTPLSARQKRFEGSEFNVLNKNDINSILRSPKKKKNYHKR</sequence>
<dbReference type="EMBL" id="AAFW02000145">
    <property type="protein sequence ID" value="EDN60268.1"/>
    <property type="molecule type" value="Genomic_DNA"/>
</dbReference>
<dbReference type="HOGENOM" id="CLU_033252_1_0_1"/>
<dbReference type="Proteomes" id="UP000007060">
    <property type="component" value="Unassembled WGS sequence"/>
</dbReference>
<dbReference type="GO" id="GO:0031965">
    <property type="term" value="C:nuclear membrane"/>
    <property type="evidence" value="ECO:0007669"/>
    <property type="project" value="UniProtKB-SubCell"/>
</dbReference>
<dbReference type="GO" id="GO:0043007">
    <property type="term" value="P:maintenance of rDNA"/>
    <property type="evidence" value="ECO:0007669"/>
    <property type="project" value="TreeGrafter"/>
</dbReference>
<dbReference type="GO" id="GO:0007096">
    <property type="term" value="P:regulation of exit from mitosis"/>
    <property type="evidence" value="ECO:0007669"/>
    <property type="project" value="TreeGrafter"/>
</dbReference>
<dbReference type="InterPro" id="IPR018819">
    <property type="entry name" value="Nur1/Mug154"/>
</dbReference>
<dbReference type="PANTHER" id="PTHR28293">
    <property type="entry name" value="NUCLEAR RIM PROTEIN 1"/>
    <property type="match status" value="1"/>
</dbReference>
<dbReference type="PANTHER" id="PTHR28293:SF1">
    <property type="entry name" value="NUCLEAR RIM PROTEIN 1"/>
    <property type="match status" value="1"/>
</dbReference>
<dbReference type="Pfam" id="PF10332">
    <property type="entry name" value="DUF2418"/>
    <property type="match status" value="1"/>
</dbReference>
<reference key="1">
    <citation type="journal article" date="2007" name="Proc. Natl. Acad. Sci. U.S.A.">
        <title>Genome sequencing and comparative analysis of Saccharomyces cerevisiae strain YJM789.</title>
        <authorList>
            <person name="Wei W."/>
            <person name="McCusker J.H."/>
            <person name="Hyman R.W."/>
            <person name="Jones T."/>
            <person name="Ning Y."/>
            <person name="Cao Z."/>
            <person name="Gu Z."/>
            <person name="Bruno D."/>
            <person name="Miranda M."/>
            <person name="Nguyen M."/>
            <person name="Wilhelmy J."/>
            <person name="Komp C."/>
            <person name="Tamse R."/>
            <person name="Wang X."/>
            <person name="Jia P."/>
            <person name="Luedi P."/>
            <person name="Oefner P.J."/>
            <person name="David L."/>
            <person name="Dietrich F.S."/>
            <person name="Li Y."/>
            <person name="Davis R.W."/>
            <person name="Steinmetz L.M."/>
        </authorList>
    </citation>
    <scope>NUCLEOTIDE SEQUENCE [LARGE SCALE GENOMIC DNA]</scope>
    <source>
        <strain>YJM789</strain>
    </source>
</reference>
<evidence type="ECO:0000250" key="1"/>
<evidence type="ECO:0000250" key="2">
    <source>
        <dbReference type="UniProtKB" id="Q12066"/>
    </source>
</evidence>
<evidence type="ECO:0000255" key="3"/>
<evidence type="ECO:0000256" key="4">
    <source>
        <dbReference type="SAM" id="MobiDB-lite"/>
    </source>
</evidence>
<evidence type="ECO:0000305" key="5"/>
<accession>A6ZXN8</accession>
<proteinExistence type="inferred from homology"/>
<keyword id="KW-0472">Membrane</keyword>
<keyword id="KW-0539">Nucleus</keyword>
<keyword id="KW-0597">Phosphoprotein</keyword>
<keyword id="KW-0812">Transmembrane</keyword>
<keyword id="KW-1133">Transmembrane helix</keyword>
<name>NUR1_YEAS7</name>
<protein>
    <recommendedName>
        <fullName>Nuclear rim protein 1</fullName>
    </recommendedName>
</protein>